<dbReference type="EMBL" id="CP000029">
    <property type="protein sequence ID" value="AAW55158.1"/>
    <property type="molecule type" value="Genomic_DNA"/>
</dbReference>
<dbReference type="RefSeq" id="WP_001829734.1">
    <property type="nucleotide sequence ID" value="NC_002976.3"/>
</dbReference>
<dbReference type="SMR" id="Q5HM04"/>
<dbReference type="STRING" id="176279.SERP1826"/>
<dbReference type="GeneID" id="93780196"/>
<dbReference type="KEGG" id="ser:SERP1826"/>
<dbReference type="eggNOG" id="COG0091">
    <property type="taxonomic scope" value="Bacteria"/>
</dbReference>
<dbReference type="HOGENOM" id="CLU_083987_3_3_9"/>
<dbReference type="Proteomes" id="UP000000531">
    <property type="component" value="Chromosome"/>
</dbReference>
<dbReference type="GO" id="GO:0022625">
    <property type="term" value="C:cytosolic large ribosomal subunit"/>
    <property type="evidence" value="ECO:0007669"/>
    <property type="project" value="TreeGrafter"/>
</dbReference>
<dbReference type="GO" id="GO:0019843">
    <property type="term" value="F:rRNA binding"/>
    <property type="evidence" value="ECO:0007669"/>
    <property type="project" value="UniProtKB-UniRule"/>
</dbReference>
<dbReference type="GO" id="GO:0003735">
    <property type="term" value="F:structural constituent of ribosome"/>
    <property type="evidence" value="ECO:0007669"/>
    <property type="project" value="InterPro"/>
</dbReference>
<dbReference type="GO" id="GO:0006412">
    <property type="term" value="P:translation"/>
    <property type="evidence" value="ECO:0007669"/>
    <property type="project" value="UniProtKB-UniRule"/>
</dbReference>
<dbReference type="CDD" id="cd00336">
    <property type="entry name" value="Ribosomal_L22"/>
    <property type="match status" value="1"/>
</dbReference>
<dbReference type="FunFam" id="3.90.470.10:FF:000001">
    <property type="entry name" value="50S ribosomal protein L22"/>
    <property type="match status" value="1"/>
</dbReference>
<dbReference type="Gene3D" id="3.90.470.10">
    <property type="entry name" value="Ribosomal protein L22/L17"/>
    <property type="match status" value="1"/>
</dbReference>
<dbReference type="HAMAP" id="MF_01331_B">
    <property type="entry name" value="Ribosomal_uL22_B"/>
    <property type="match status" value="1"/>
</dbReference>
<dbReference type="InterPro" id="IPR001063">
    <property type="entry name" value="Ribosomal_uL22"/>
</dbReference>
<dbReference type="InterPro" id="IPR005727">
    <property type="entry name" value="Ribosomal_uL22_bac/chlpt-type"/>
</dbReference>
<dbReference type="InterPro" id="IPR047867">
    <property type="entry name" value="Ribosomal_uL22_bac/org-type"/>
</dbReference>
<dbReference type="InterPro" id="IPR018260">
    <property type="entry name" value="Ribosomal_uL22_CS"/>
</dbReference>
<dbReference type="InterPro" id="IPR036394">
    <property type="entry name" value="Ribosomal_uL22_sf"/>
</dbReference>
<dbReference type="NCBIfam" id="TIGR01044">
    <property type="entry name" value="rplV_bact"/>
    <property type="match status" value="1"/>
</dbReference>
<dbReference type="PANTHER" id="PTHR13501">
    <property type="entry name" value="CHLOROPLAST 50S RIBOSOMAL PROTEIN L22-RELATED"/>
    <property type="match status" value="1"/>
</dbReference>
<dbReference type="PANTHER" id="PTHR13501:SF8">
    <property type="entry name" value="LARGE RIBOSOMAL SUBUNIT PROTEIN UL22M"/>
    <property type="match status" value="1"/>
</dbReference>
<dbReference type="Pfam" id="PF00237">
    <property type="entry name" value="Ribosomal_L22"/>
    <property type="match status" value="1"/>
</dbReference>
<dbReference type="SUPFAM" id="SSF54843">
    <property type="entry name" value="Ribosomal protein L22"/>
    <property type="match status" value="1"/>
</dbReference>
<dbReference type="PROSITE" id="PS00464">
    <property type="entry name" value="RIBOSOMAL_L22"/>
    <property type="match status" value="1"/>
</dbReference>
<protein>
    <recommendedName>
        <fullName evidence="1">Large ribosomal subunit protein uL22</fullName>
    </recommendedName>
    <alternativeName>
        <fullName evidence="2">50S ribosomal protein L22</fullName>
    </alternativeName>
</protein>
<sequence length="117" mass="12821">MEAKAVARTIRIAPRKVRLVLDLIRGKNAGEAIAILKLTNKASSPVIEKVLMSALANAEHNYDMNTDELVVKEAYANEGPTLKRFRPRAQGRASAINKRTSHITIVVSDGKEEAKEA</sequence>
<reference key="1">
    <citation type="journal article" date="2005" name="J. Bacteriol.">
        <title>Insights on evolution of virulence and resistance from the complete genome analysis of an early methicillin-resistant Staphylococcus aureus strain and a biofilm-producing methicillin-resistant Staphylococcus epidermidis strain.</title>
        <authorList>
            <person name="Gill S.R."/>
            <person name="Fouts D.E."/>
            <person name="Archer G.L."/>
            <person name="Mongodin E.F."/>
            <person name="DeBoy R.T."/>
            <person name="Ravel J."/>
            <person name="Paulsen I.T."/>
            <person name="Kolonay J.F."/>
            <person name="Brinkac L.M."/>
            <person name="Beanan M.J."/>
            <person name="Dodson R.J."/>
            <person name="Daugherty S.C."/>
            <person name="Madupu R."/>
            <person name="Angiuoli S.V."/>
            <person name="Durkin A.S."/>
            <person name="Haft D.H."/>
            <person name="Vamathevan J.J."/>
            <person name="Khouri H."/>
            <person name="Utterback T.R."/>
            <person name="Lee C."/>
            <person name="Dimitrov G."/>
            <person name="Jiang L."/>
            <person name="Qin H."/>
            <person name="Weidman J."/>
            <person name="Tran K."/>
            <person name="Kang K.H."/>
            <person name="Hance I.R."/>
            <person name="Nelson K.E."/>
            <person name="Fraser C.M."/>
        </authorList>
    </citation>
    <scope>NUCLEOTIDE SEQUENCE [LARGE SCALE GENOMIC DNA]</scope>
    <source>
        <strain>ATCC 35984 / DSM 28319 / BCRC 17069 / CCUG 31568 / BM 3577 / RP62A</strain>
    </source>
</reference>
<organism>
    <name type="scientific">Staphylococcus epidermidis (strain ATCC 35984 / DSM 28319 / BCRC 17069 / CCUG 31568 / BM 3577 / RP62A)</name>
    <dbReference type="NCBI Taxonomy" id="176279"/>
    <lineage>
        <taxon>Bacteria</taxon>
        <taxon>Bacillati</taxon>
        <taxon>Bacillota</taxon>
        <taxon>Bacilli</taxon>
        <taxon>Bacillales</taxon>
        <taxon>Staphylococcaceae</taxon>
        <taxon>Staphylococcus</taxon>
    </lineage>
</organism>
<name>RL22_STAEQ</name>
<keyword id="KW-1185">Reference proteome</keyword>
<keyword id="KW-0687">Ribonucleoprotein</keyword>
<keyword id="KW-0689">Ribosomal protein</keyword>
<keyword id="KW-0694">RNA-binding</keyword>
<keyword id="KW-0699">rRNA-binding</keyword>
<comment type="function">
    <text evidence="1">This protein binds specifically to 23S rRNA; its binding is stimulated by other ribosomal proteins, e.g. L4, L17, and L20. It is important during the early stages of 50S assembly. It makes multiple contacts with different domains of the 23S rRNA in the assembled 50S subunit and ribosome (By similarity).</text>
</comment>
<comment type="function">
    <text evidence="1">The globular domain of the protein is located near the polypeptide exit tunnel on the outside of the subunit, while an extended beta-hairpin is found that lines the wall of the exit tunnel in the center of the 70S ribosome.</text>
</comment>
<comment type="subunit">
    <text evidence="1">Part of the 50S ribosomal subunit.</text>
</comment>
<comment type="similarity">
    <text evidence="1">Belongs to the universal ribosomal protein uL22 family.</text>
</comment>
<gene>
    <name evidence="1" type="primary">rplV</name>
    <name type="ordered locus">SERP1826</name>
</gene>
<accession>Q5HM04</accession>
<evidence type="ECO:0000255" key="1">
    <source>
        <dbReference type="HAMAP-Rule" id="MF_01331"/>
    </source>
</evidence>
<evidence type="ECO:0000305" key="2"/>
<proteinExistence type="inferred from homology"/>
<feature type="chain" id="PRO_0000125228" description="Large ribosomal subunit protein uL22">
    <location>
        <begin position="1"/>
        <end position="117"/>
    </location>
</feature>